<protein>
    <recommendedName>
        <fullName evidence="1">Methionyl-tRNA formyltransferase</fullName>
        <ecNumber evidence="1">2.1.2.9</ecNumber>
    </recommendedName>
</protein>
<comment type="function">
    <text evidence="1">Attaches a formyl group to the free amino group of methionyl-tRNA(fMet). The formyl group appears to play a dual role in the initiator identity of N-formylmethionyl-tRNA by promoting its recognition by IF2 and preventing the misappropriation of this tRNA by the elongation apparatus.</text>
</comment>
<comment type="catalytic activity">
    <reaction evidence="1">
        <text>L-methionyl-tRNA(fMet) + (6R)-10-formyltetrahydrofolate = N-formyl-L-methionyl-tRNA(fMet) + (6S)-5,6,7,8-tetrahydrofolate + H(+)</text>
        <dbReference type="Rhea" id="RHEA:24380"/>
        <dbReference type="Rhea" id="RHEA-COMP:9952"/>
        <dbReference type="Rhea" id="RHEA-COMP:9953"/>
        <dbReference type="ChEBI" id="CHEBI:15378"/>
        <dbReference type="ChEBI" id="CHEBI:57453"/>
        <dbReference type="ChEBI" id="CHEBI:78530"/>
        <dbReference type="ChEBI" id="CHEBI:78844"/>
        <dbReference type="ChEBI" id="CHEBI:195366"/>
        <dbReference type="EC" id="2.1.2.9"/>
    </reaction>
</comment>
<comment type="similarity">
    <text evidence="1">Belongs to the Fmt family.</text>
</comment>
<reference key="1">
    <citation type="journal article" date="2010" name="ISME J.">
        <title>The complete genome sequence of the algal symbiont Dinoroseobacter shibae: a hitchhiker's guide to life in the sea.</title>
        <authorList>
            <person name="Wagner-Dobler I."/>
            <person name="Ballhausen B."/>
            <person name="Berger M."/>
            <person name="Brinkhoff T."/>
            <person name="Buchholz I."/>
            <person name="Bunk B."/>
            <person name="Cypionka H."/>
            <person name="Daniel R."/>
            <person name="Drepper T."/>
            <person name="Gerdts G."/>
            <person name="Hahnke S."/>
            <person name="Han C."/>
            <person name="Jahn D."/>
            <person name="Kalhoefer D."/>
            <person name="Kiss H."/>
            <person name="Klenk H.P."/>
            <person name="Kyrpides N."/>
            <person name="Liebl W."/>
            <person name="Liesegang H."/>
            <person name="Meincke L."/>
            <person name="Pati A."/>
            <person name="Petersen J."/>
            <person name="Piekarski T."/>
            <person name="Pommerenke C."/>
            <person name="Pradella S."/>
            <person name="Pukall R."/>
            <person name="Rabus R."/>
            <person name="Stackebrandt E."/>
            <person name="Thole S."/>
            <person name="Thompson L."/>
            <person name="Tielen P."/>
            <person name="Tomasch J."/>
            <person name="von Jan M."/>
            <person name="Wanphrut N."/>
            <person name="Wichels A."/>
            <person name="Zech H."/>
            <person name="Simon M."/>
        </authorList>
    </citation>
    <scope>NUCLEOTIDE SEQUENCE [LARGE SCALE GENOMIC DNA]</scope>
    <source>
        <strain>DSM 16493 / NCIMB 14021 / DFL 12</strain>
    </source>
</reference>
<feature type="chain" id="PRO_1000077298" description="Methionyl-tRNA formyltransferase">
    <location>
        <begin position="1"/>
        <end position="299"/>
    </location>
</feature>
<feature type="binding site" evidence="1">
    <location>
        <begin position="109"/>
        <end position="112"/>
    </location>
    <ligand>
        <name>(6S)-5,6,7,8-tetrahydrofolate</name>
        <dbReference type="ChEBI" id="CHEBI:57453"/>
    </ligand>
</feature>
<proteinExistence type="inferred from homology"/>
<keyword id="KW-0648">Protein biosynthesis</keyword>
<keyword id="KW-1185">Reference proteome</keyword>
<keyword id="KW-0808">Transferase</keyword>
<organism>
    <name type="scientific">Dinoroseobacter shibae (strain DSM 16493 / NCIMB 14021 / DFL 12)</name>
    <dbReference type="NCBI Taxonomy" id="398580"/>
    <lineage>
        <taxon>Bacteria</taxon>
        <taxon>Pseudomonadati</taxon>
        <taxon>Pseudomonadota</taxon>
        <taxon>Alphaproteobacteria</taxon>
        <taxon>Rhodobacterales</taxon>
        <taxon>Roseobacteraceae</taxon>
        <taxon>Dinoroseobacter</taxon>
    </lineage>
</organism>
<sequence length="299" mass="31190">MRLVFMGTPAFSVPVLDALVAAGHEVAAVYCQPPRPAGRGKKPRPSPVQARAEVLGLAVRHPVSLKGAEAQADFAALGAEIAVVVAYGLILPQAVLDAPEHGCWNIHASLLPRWRGAAPIHRAILAGDAETGVCIMQMEAGLDTGPVLLREAVAIGAEETTGGLHDRLSALGARLIVEALARRAELVPEPQPEVGVTYAAKIDKAEARVDWSRPAVEVDRLIRGLSPVPGAWCEIAGERVKLLGSRLAEGSGAAGQVLEGFTLACGVGAVEITRAQRAGRKAADAAEILRGMTLPARLD</sequence>
<dbReference type="EC" id="2.1.2.9" evidence="1"/>
<dbReference type="EMBL" id="CP000830">
    <property type="protein sequence ID" value="ABV91930.1"/>
    <property type="molecule type" value="Genomic_DNA"/>
</dbReference>
<dbReference type="RefSeq" id="WP_012176863.1">
    <property type="nucleotide sequence ID" value="NC_009952.1"/>
</dbReference>
<dbReference type="SMR" id="A8LLC0"/>
<dbReference type="STRING" id="398580.Dshi_0181"/>
<dbReference type="KEGG" id="dsh:Dshi_0181"/>
<dbReference type="eggNOG" id="COG0223">
    <property type="taxonomic scope" value="Bacteria"/>
</dbReference>
<dbReference type="HOGENOM" id="CLU_033347_1_2_5"/>
<dbReference type="OrthoDB" id="9802815at2"/>
<dbReference type="Proteomes" id="UP000006833">
    <property type="component" value="Chromosome"/>
</dbReference>
<dbReference type="GO" id="GO:0005829">
    <property type="term" value="C:cytosol"/>
    <property type="evidence" value="ECO:0007669"/>
    <property type="project" value="TreeGrafter"/>
</dbReference>
<dbReference type="GO" id="GO:0004479">
    <property type="term" value="F:methionyl-tRNA formyltransferase activity"/>
    <property type="evidence" value="ECO:0007669"/>
    <property type="project" value="UniProtKB-UniRule"/>
</dbReference>
<dbReference type="CDD" id="cd08646">
    <property type="entry name" value="FMT_core_Met-tRNA-FMT_N"/>
    <property type="match status" value="1"/>
</dbReference>
<dbReference type="CDD" id="cd08704">
    <property type="entry name" value="Met_tRNA_FMT_C"/>
    <property type="match status" value="1"/>
</dbReference>
<dbReference type="Gene3D" id="3.40.50.12230">
    <property type="match status" value="1"/>
</dbReference>
<dbReference type="HAMAP" id="MF_00182">
    <property type="entry name" value="Formyl_trans"/>
    <property type="match status" value="1"/>
</dbReference>
<dbReference type="InterPro" id="IPR005794">
    <property type="entry name" value="Fmt"/>
</dbReference>
<dbReference type="InterPro" id="IPR005793">
    <property type="entry name" value="Formyl_trans_C"/>
</dbReference>
<dbReference type="InterPro" id="IPR002376">
    <property type="entry name" value="Formyl_transf_N"/>
</dbReference>
<dbReference type="InterPro" id="IPR036477">
    <property type="entry name" value="Formyl_transf_N_sf"/>
</dbReference>
<dbReference type="InterPro" id="IPR011034">
    <property type="entry name" value="Formyl_transferase-like_C_sf"/>
</dbReference>
<dbReference type="InterPro" id="IPR001555">
    <property type="entry name" value="GART_AS"/>
</dbReference>
<dbReference type="InterPro" id="IPR044135">
    <property type="entry name" value="Met-tRNA-FMT_C"/>
</dbReference>
<dbReference type="InterPro" id="IPR041711">
    <property type="entry name" value="Met-tRNA-FMT_N"/>
</dbReference>
<dbReference type="NCBIfam" id="TIGR00460">
    <property type="entry name" value="fmt"/>
    <property type="match status" value="1"/>
</dbReference>
<dbReference type="PANTHER" id="PTHR11138">
    <property type="entry name" value="METHIONYL-TRNA FORMYLTRANSFERASE"/>
    <property type="match status" value="1"/>
</dbReference>
<dbReference type="PANTHER" id="PTHR11138:SF5">
    <property type="entry name" value="METHIONYL-TRNA FORMYLTRANSFERASE, MITOCHONDRIAL"/>
    <property type="match status" value="1"/>
</dbReference>
<dbReference type="Pfam" id="PF02911">
    <property type="entry name" value="Formyl_trans_C"/>
    <property type="match status" value="1"/>
</dbReference>
<dbReference type="Pfam" id="PF00551">
    <property type="entry name" value="Formyl_trans_N"/>
    <property type="match status" value="1"/>
</dbReference>
<dbReference type="SUPFAM" id="SSF50486">
    <property type="entry name" value="FMT C-terminal domain-like"/>
    <property type="match status" value="1"/>
</dbReference>
<dbReference type="SUPFAM" id="SSF53328">
    <property type="entry name" value="Formyltransferase"/>
    <property type="match status" value="1"/>
</dbReference>
<dbReference type="PROSITE" id="PS00373">
    <property type="entry name" value="GART"/>
    <property type="match status" value="1"/>
</dbReference>
<accession>A8LLC0</accession>
<gene>
    <name evidence="1" type="primary">fmt</name>
    <name type="ordered locus">Dshi_0181</name>
</gene>
<name>FMT_DINSH</name>
<evidence type="ECO:0000255" key="1">
    <source>
        <dbReference type="HAMAP-Rule" id="MF_00182"/>
    </source>
</evidence>